<keyword id="KW-0143">Chaperone</keyword>
<keyword id="KW-0963">Cytoplasm</keyword>
<comment type="function">
    <text evidence="1">Together with the chaperonin GroEL, plays an essential role in assisting protein folding. The GroEL-GroES system forms a nano-cage that allows encapsulation of the non-native substrate proteins and provides a physical environment optimized to promote and accelerate protein folding. GroES binds to the apical surface of the GroEL ring, thereby capping the opening of the GroEL channel.</text>
</comment>
<comment type="subunit">
    <text evidence="1">Heptamer of 7 subunits arranged in a ring. Interacts with the chaperonin GroEL.</text>
</comment>
<comment type="subcellular location">
    <subcellularLocation>
        <location evidence="1">Cytoplasm</location>
    </subcellularLocation>
</comment>
<comment type="similarity">
    <text evidence="1">Belongs to the GroES chaperonin family.</text>
</comment>
<proteinExistence type="inferred from homology"/>
<organism>
    <name type="scientific">Clostridium kluyveri (strain NBRC 12016)</name>
    <dbReference type="NCBI Taxonomy" id="583346"/>
    <lineage>
        <taxon>Bacteria</taxon>
        <taxon>Bacillati</taxon>
        <taxon>Bacillota</taxon>
        <taxon>Clostridia</taxon>
        <taxon>Eubacteriales</taxon>
        <taxon>Clostridiaceae</taxon>
        <taxon>Clostridium</taxon>
    </lineage>
</organism>
<accession>B9DYY4</accession>
<name>CH10_CLOK1</name>
<evidence type="ECO:0000255" key="1">
    <source>
        <dbReference type="HAMAP-Rule" id="MF_00580"/>
    </source>
</evidence>
<reference key="1">
    <citation type="submission" date="2005-09" db="EMBL/GenBank/DDBJ databases">
        <title>Complete genome sequence of Clostridium kluyveri and comparative genomics of Clostridia species.</title>
        <authorList>
            <person name="Inui M."/>
            <person name="Nonaka H."/>
            <person name="Shinoda Y."/>
            <person name="Ikenaga Y."/>
            <person name="Abe M."/>
            <person name="Naito K."/>
            <person name="Vertes A.A."/>
            <person name="Yukawa H."/>
        </authorList>
    </citation>
    <scope>NUCLEOTIDE SEQUENCE [LARGE SCALE GENOMIC DNA]</scope>
    <source>
        <strain>NBRC 12016</strain>
    </source>
</reference>
<sequence>MKIRPLGDRVVIKKIEAEETTKSGIVLPGSAKEKPQEAEIVAVGPGGVIDGKEIKMEVKVGDRVLFSKYAGNEVKIDGVEYTILRQDDILAIIE</sequence>
<feature type="chain" id="PRO_1000146897" description="Co-chaperonin GroES">
    <location>
        <begin position="1"/>
        <end position="94"/>
    </location>
</feature>
<dbReference type="EMBL" id="AP009049">
    <property type="protein sequence ID" value="BAH05459.1"/>
    <property type="molecule type" value="Genomic_DNA"/>
</dbReference>
<dbReference type="RefSeq" id="WP_011989032.1">
    <property type="nucleotide sequence ID" value="NC_011837.1"/>
</dbReference>
<dbReference type="SMR" id="B9DYY4"/>
<dbReference type="KEGG" id="ckr:CKR_0408"/>
<dbReference type="HOGENOM" id="CLU_132825_2_0_9"/>
<dbReference type="Proteomes" id="UP000007969">
    <property type="component" value="Chromosome"/>
</dbReference>
<dbReference type="GO" id="GO:0005737">
    <property type="term" value="C:cytoplasm"/>
    <property type="evidence" value="ECO:0007669"/>
    <property type="project" value="UniProtKB-SubCell"/>
</dbReference>
<dbReference type="GO" id="GO:0005524">
    <property type="term" value="F:ATP binding"/>
    <property type="evidence" value="ECO:0007669"/>
    <property type="project" value="InterPro"/>
</dbReference>
<dbReference type="GO" id="GO:0046872">
    <property type="term" value="F:metal ion binding"/>
    <property type="evidence" value="ECO:0007669"/>
    <property type="project" value="TreeGrafter"/>
</dbReference>
<dbReference type="GO" id="GO:0044183">
    <property type="term" value="F:protein folding chaperone"/>
    <property type="evidence" value="ECO:0007669"/>
    <property type="project" value="InterPro"/>
</dbReference>
<dbReference type="GO" id="GO:0051087">
    <property type="term" value="F:protein-folding chaperone binding"/>
    <property type="evidence" value="ECO:0007669"/>
    <property type="project" value="TreeGrafter"/>
</dbReference>
<dbReference type="GO" id="GO:0051082">
    <property type="term" value="F:unfolded protein binding"/>
    <property type="evidence" value="ECO:0007669"/>
    <property type="project" value="TreeGrafter"/>
</dbReference>
<dbReference type="GO" id="GO:0051085">
    <property type="term" value="P:chaperone cofactor-dependent protein refolding"/>
    <property type="evidence" value="ECO:0007669"/>
    <property type="project" value="TreeGrafter"/>
</dbReference>
<dbReference type="CDD" id="cd00320">
    <property type="entry name" value="cpn10"/>
    <property type="match status" value="1"/>
</dbReference>
<dbReference type="FunFam" id="2.30.33.40:FF:000001">
    <property type="entry name" value="10 kDa chaperonin"/>
    <property type="match status" value="1"/>
</dbReference>
<dbReference type="Gene3D" id="2.30.33.40">
    <property type="entry name" value="GroES chaperonin"/>
    <property type="match status" value="1"/>
</dbReference>
<dbReference type="HAMAP" id="MF_00580">
    <property type="entry name" value="CH10"/>
    <property type="match status" value="1"/>
</dbReference>
<dbReference type="InterPro" id="IPR020818">
    <property type="entry name" value="Chaperonin_GroES"/>
</dbReference>
<dbReference type="InterPro" id="IPR037124">
    <property type="entry name" value="Chaperonin_GroES_sf"/>
</dbReference>
<dbReference type="InterPro" id="IPR018369">
    <property type="entry name" value="Chaprnonin_Cpn10_CS"/>
</dbReference>
<dbReference type="InterPro" id="IPR011032">
    <property type="entry name" value="GroES-like_sf"/>
</dbReference>
<dbReference type="NCBIfam" id="NF001527">
    <property type="entry name" value="PRK00364.1-2"/>
    <property type="match status" value="1"/>
</dbReference>
<dbReference type="NCBIfam" id="NF001531">
    <property type="entry name" value="PRK00364.2-2"/>
    <property type="match status" value="1"/>
</dbReference>
<dbReference type="NCBIfam" id="NF001533">
    <property type="entry name" value="PRK00364.2-4"/>
    <property type="match status" value="1"/>
</dbReference>
<dbReference type="NCBIfam" id="NF001534">
    <property type="entry name" value="PRK00364.2-5"/>
    <property type="match status" value="1"/>
</dbReference>
<dbReference type="PANTHER" id="PTHR10772">
    <property type="entry name" value="10 KDA HEAT SHOCK PROTEIN"/>
    <property type="match status" value="1"/>
</dbReference>
<dbReference type="PANTHER" id="PTHR10772:SF58">
    <property type="entry name" value="CO-CHAPERONIN GROES"/>
    <property type="match status" value="1"/>
</dbReference>
<dbReference type="Pfam" id="PF00166">
    <property type="entry name" value="Cpn10"/>
    <property type="match status" value="1"/>
</dbReference>
<dbReference type="PRINTS" id="PR00297">
    <property type="entry name" value="CHAPERONIN10"/>
</dbReference>
<dbReference type="SMART" id="SM00883">
    <property type="entry name" value="Cpn10"/>
    <property type="match status" value="1"/>
</dbReference>
<dbReference type="SUPFAM" id="SSF50129">
    <property type="entry name" value="GroES-like"/>
    <property type="match status" value="1"/>
</dbReference>
<dbReference type="PROSITE" id="PS00681">
    <property type="entry name" value="CHAPERONINS_CPN10"/>
    <property type="match status" value="1"/>
</dbReference>
<gene>
    <name evidence="1" type="primary">groES</name>
    <name evidence="1" type="synonym">groS</name>
    <name type="ordered locus">CKR_0408</name>
</gene>
<protein>
    <recommendedName>
        <fullName evidence="1">Co-chaperonin GroES</fullName>
    </recommendedName>
    <alternativeName>
        <fullName evidence="1">10 kDa chaperonin</fullName>
    </alternativeName>
    <alternativeName>
        <fullName evidence="1">Chaperonin-10</fullName>
        <shortName evidence="1">Cpn10</shortName>
    </alternativeName>
</protein>